<gene>
    <name type="primary">crtZ</name>
</gene>
<dbReference type="EC" id="1.14.15.24" evidence="2"/>
<dbReference type="EMBL" id="D58422">
    <property type="protein sequence ID" value="BAA09597.1"/>
    <property type="molecule type" value="Genomic_DNA"/>
</dbReference>
<dbReference type="BRENDA" id="1.14.15.24">
    <property type="organism ID" value="15481"/>
</dbReference>
<dbReference type="UniPathway" id="UPA00387"/>
<dbReference type="GO" id="GO:0010291">
    <property type="term" value="F:beta-carotene 3-hydroxylase activity"/>
    <property type="evidence" value="ECO:0007669"/>
    <property type="project" value="UniProtKB-EC"/>
</dbReference>
<dbReference type="GO" id="GO:0005506">
    <property type="term" value="F:iron ion binding"/>
    <property type="evidence" value="ECO:0007669"/>
    <property type="project" value="InterPro"/>
</dbReference>
<dbReference type="GO" id="GO:0016119">
    <property type="term" value="P:carotene metabolic process"/>
    <property type="evidence" value="ECO:0007669"/>
    <property type="project" value="TreeGrafter"/>
</dbReference>
<dbReference type="GO" id="GO:0016123">
    <property type="term" value="P:xanthophyll biosynthetic process"/>
    <property type="evidence" value="ECO:0007669"/>
    <property type="project" value="TreeGrafter"/>
</dbReference>
<dbReference type="InterPro" id="IPR045019">
    <property type="entry name" value="BETA-OHASE-like"/>
</dbReference>
<dbReference type="InterPro" id="IPR006694">
    <property type="entry name" value="Fatty_acid_hydroxylase"/>
</dbReference>
<dbReference type="PANTHER" id="PTHR31899">
    <property type="entry name" value="BETA-CAROTENE 3-HYDROXYLASE 1, CHLOROPLASTIC"/>
    <property type="match status" value="1"/>
</dbReference>
<dbReference type="PANTHER" id="PTHR31899:SF9">
    <property type="entry name" value="BETA-CAROTENE 3-HYDROXYLASE 1, CHLOROPLASTIC"/>
    <property type="match status" value="1"/>
</dbReference>
<dbReference type="Pfam" id="PF04116">
    <property type="entry name" value="FA_hydroxylase"/>
    <property type="match status" value="1"/>
</dbReference>
<sequence>MTQFLIVVATVLVMELTAYSVHRWIMHGPLGWGWHKSHHEEHDHALEKNDLYGVVFAVLATILFTVGAYWWPVLWWIALGMTVYGLIYFILHDGLVHQRWPFRYIPRRGYFRRLYQAHRLHHAVEGRDHCVSFGFIYAPPVDKLKQDLKRSGVLRPQDERPS</sequence>
<protein>
    <recommendedName>
        <fullName>Beta-carotene hydroxylase</fullName>
        <ecNumber evidence="2">1.14.15.24</ecNumber>
    </recommendedName>
</protein>
<organism>
    <name type="scientific">Paracoccus sp. (strain PC1)</name>
    <name type="common">Alcaligenes sp. (strain PC1)</name>
    <dbReference type="NCBI Taxonomy" id="365615"/>
    <lineage>
        <taxon>Bacteria</taxon>
        <taxon>Pseudomonadati</taxon>
        <taxon>Pseudomonadota</taxon>
        <taxon>Alphaproteobacteria</taxon>
        <taxon>Rhodobacterales</taxon>
        <taxon>Paracoccaceae</taxon>
        <taxon>Paracoccus</taxon>
    </lineage>
</organism>
<feature type="chain" id="PRO_0000079377" description="Beta-carotene hydroxylase">
    <location>
        <begin position="1"/>
        <end position="162"/>
    </location>
</feature>
<feature type="domain" description="Fatty acid hydroxylase" evidence="3">
    <location>
        <begin position="8"/>
        <end position="135"/>
    </location>
</feature>
<comment type="function">
    <text evidence="1">Catalyzes the hydroxylation reaction from beta-carotene to zeaxanthin via beta-cryptoxanthin.</text>
</comment>
<comment type="catalytic activity">
    <reaction evidence="2">
        <text>all-trans-beta-carotene + 4 reduced [2Fe-2S]-[ferredoxin] + 2 O2 + 4 H(+) = all-trans-zeaxanthin + 4 oxidized [2Fe-2S]-[ferredoxin] + 2 H2O</text>
        <dbReference type="Rhea" id="RHEA:30331"/>
        <dbReference type="Rhea" id="RHEA-COMP:10000"/>
        <dbReference type="Rhea" id="RHEA-COMP:10001"/>
        <dbReference type="ChEBI" id="CHEBI:15377"/>
        <dbReference type="ChEBI" id="CHEBI:15378"/>
        <dbReference type="ChEBI" id="CHEBI:15379"/>
        <dbReference type="ChEBI" id="CHEBI:17579"/>
        <dbReference type="ChEBI" id="CHEBI:27547"/>
        <dbReference type="ChEBI" id="CHEBI:33737"/>
        <dbReference type="ChEBI" id="CHEBI:33738"/>
        <dbReference type="EC" id="1.14.15.24"/>
    </reaction>
</comment>
<comment type="pathway">
    <text>Carotenoid biosynthesis; astaxanthin biosynthesis.</text>
</comment>
<comment type="similarity">
    <text evidence="4">Belongs to the sterol desaturase family.</text>
</comment>
<keyword id="KW-0125">Carotenoid biosynthesis</keyword>
<keyword id="KW-0560">Oxidoreductase</keyword>
<reference key="1">
    <citation type="journal article" date="1995" name="Biochem. Biophys. Res. Commun.">
        <title>Canthaxanthin biosynthesis by the conversion of methylene to keto groups in a hydrocarbon beta-carotene by a single gene.</title>
        <authorList>
            <person name="Misawa N."/>
            <person name="Kajiwara S."/>
            <person name="Kondo K."/>
            <person name="Yokoyama A."/>
            <person name="Satomi Y."/>
            <person name="Saito T."/>
            <person name="Miki W."/>
            <person name="Ohtani T."/>
        </authorList>
    </citation>
    <scope>NUCLEOTIDE SEQUENCE [GENOMIC DNA]</scope>
</reference>
<accession>Q44262</accession>
<name>CRTZ_PARS1</name>
<evidence type="ECO:0000250" key="1"/>
<evidence type="ECO:0000250" key="2">
    <source>
        <dbReference type="UniProtKB" id="Q9SZZ8"/>
    </source>
</evidence>
<evidence type="ECO:0000255" key="3"/>
<evidence type="ECO:0000305" key="4"/>
<proteinExistence type="inferred from homology"/>